<dbReference type="EC" id="2.6.1.13" evidence="1"/>
<dbReference type="EMBL" id="AP008955">
    <property type="protein sequence ID" value="BAH43223.1"/>
    <property type="molecule type" value="Genomic_DNA"/>
</dbReference>
<dbReference type="RefSeq" id="WP_012685950.1">
    <property type="nucleotide sequence ID" value="NC_012491.1"/>
</dbReference>
<dbReference type="SMR" id="C0ZBR4"/>
<dbReference type="STRING" id="358681.BBR47_22460"/>
<dbReference type="KEGG" id="bbe:BBR47_22460"/>
<dbReference type="eggNOG" id="COG4992">
    <property type="taxonomic scope" value="Bacteria"/>
</dbReference>
<dbReference type="HOGENOM" id="CLU_016922_10_3_9"/>
<dbReference type="UniPathway" id="UPA00098">
    <property type="reaction ID" value="UER00358"/>
</dbReference>
<dbReference type="Proteomes" id="UP000001877">
    <property type="component" value="Chromosome"/>
</dbReference>
<dbReference type="GO" id="GO:0005737">
    <property type="term" value="C:cytoplasm"/>
    <property type="evidence" value="ECO:0007669"/>
    <property type="project" value="UniProtKB-SubCell"/>
</dbReference>
<dbReference type="GO" id="GO:0042802">
    <property type="term" value="F:identical protein binding"/>
    <property type="evidence" value="ECO:0007669"/>
    <property type="project" value="TreeGrafter"/>
</dbReference>
<dbReference type="GO" id="GO:0004587">
    <property type="term" value="F:ornithine aminotransferase activity"/>
    <property type="evidence" value="ECO:0007669"/>
    <property type="project" value="UniProtKB-UniRule"/>
</dbReference>
<dbReference type="GO" id="GO:0030170">
    <property type="term" value="F:pyridoxal phosphate binding"/>
    <property type="evidence" value="ECO:0007669"/>
    <property type="project" value="UniProtKB-UniRule"/>
</dbReference>
<dbReference type="GO" id="GO:0055129">
    <property type="term" value="P:L-proline biosynthetic process"/>
    <property type="evidence" value="ECO:0007669"/>
    <property type="project" value="UniProtKB-UniRule"/>
</dbReference>
<dbReference type="CDD" id="cd00610">
    <property type="entry name" value="OAT_like"/>
    <property type="match status" value="1"/>
</dbReference>
<dbReference type="FunFam" id="3.40.640.10:FF:000011">
    <property type="entry name" value="Ornithine aminotransferase"/>
    <property type="match status" value="1"/>
</dbReference>
<dbReference type="Gene3D" id="3.90.1150.10">
    <property type="entry name" value="Aspartate Aminotransferase, domain 1"/>
    <property type="match status" value="1"/>
</dbReference>
<dbReference type="Gene3D" id="3.40.640.10">
    <property type="entry name" value="Type I PLP-dependent aspartate aminotransferase-like (Major domain)"/>
    <property type="match status" value="1"/>
</dbReference>
<dbReference type="HAMAP" id="MF_01689">
    <property type="entry name" value="Ornith_aminotrans_3"/>
    <property type="match status" value="1"/>
</dbReference>
<dbReference type="InterPro" id="IPR005814">
    <property type="entry name" value="Aminotrans_3"/>
</dbReference>
<dbReference type="InterPro" id="IPR049704">
    <property type="entry name" value="Aminotrans_3_PPA_site"/>
</dbReference>
<dbReference type="InterPro" id="IPR050103">
    <property type="entry name" value="Class-III_PLP-dep_AT"/>
</dbReference>
<dbReference type="InterPro" id="IPR010164">
    <property type="entry name" value="Orn_aminotrans"/>
</dbReference>
<dbReference type="InterPro" id="IPR034757">
    <property type="entry name" value="Ornith_aminotrans_bact"/>
</dbReference>
<dbReference type="InterPro" id="IPR015424">
    <property type="entry name" value="PyrdxlP-dep_Trfase"/>
</dbReference>
<dbReference type="InterPro" id="IPR015421">
    <property type="entry name" value="PyrdxlP-dep_Trfase_major"/>
</dbReference>
<dbReference type="InterPro" id="IPR015422">
    <property type="entry name" value="PyrdxlP-dep_Trfase_small"/>
</dbReference>
<dbReference type="NCBIfam" id="TIGR01885">
    <property type="entry name" value="Orn_aminotrans"/>
    <property type="match status" value="1"/>
</dbReference>
<dbReference type="NCBIfam" id="NF003145">
    <property type="entry name" value="PRK04073.1"/>
    <property type="match status" value="1"/>
</dbReference>
<dbReference type="PANTHER" id="PTHR11986">
    <property type="entry name" value="AMINOTRANSFERASE CLASS III"/>
    <property type="match status" value="1"/>
</dbReference>
<dbReference type="PANTHER" id="PTHR11986:SF18">
    <property type="entry name" value="ORNITHINE AMINOTRANSFERASE, MITOCHONDRIAL"/>
    <property type="match status" value="1"/>
</dbReference>
<dbReference type="Pfam" id="PF00202">
    <property type="entry name" value="Aminotran_3"/>
    <property type="match status" value="1"/>
</dbReference>
<dbReference type="PIRSF" id="PIRSF000521">
    <property type="entry name" value="Transaminase_4ab_Lys_Orn"/>
    <property type="match status" value="1"/>
</dbReference>
<dbReference type="SUPFAM" id="SSF53383">
    <property type="entry name" value="PLP-dependent transferases"/>
    <property type="match status" value="1"/>
</dbReference>
<dbReference type="PROSITE" id="PS00600">
    <property type="entry name" value="AA_TRANSFER_CLASS_3"/>
    <property type="match status" value="1"/>
</dbReference>
<name>OAT_BREBN</name>
<keyword id="KW-0028">Amino-acid biosynthesis</keyword>
<keyword id="KW-0032">Aminotransferase</keyword>
<keyword id="KW-0963">Cytoplasm</keyword>
<keyword id="KW-0641">Proline biosynthesis</keyword>
<keyword id="KW-0663">Pyridoxal phosphate</keyword>
<keyword id="KW-1185">Reference proteome</keyword>
<keyword id="KW-0808">Transferase</keyword>
<gene>
    <name evidence="1" type="primary">rocD</name>
    <name type="ordered locus">BBR47_22460</name>
</gene>
<proteinExistence type="inferred from homology"/>
<organism>
    <name type="scientific">Brevibacillus brevis (strain 47 / JCM 6285 / NBRC 100599)</name>
    <dbReference type="NCBI Taxonomy" id="358681"/>
    <lineage>
        <taxon>Bacteria</taxon>
        <taxon>Bacillati</taxon>
        <taxon>Bacillota</taxon>
        <taxon>Bacilli</taxon>
        <taxon>Bacillales</taxon>
        <taxon>Paenibacillaceae</taxon>
        <taxon>Brevibacillus</taxon>
    </lineage>
</organism>
<sequence length="399" mass="43935">MSKTNVVIEQTEKFGAHNYHPLPIVISKAEGVWVHDPEGNKYLDMLSAYSALNQGHRHPRIIQALKDQADKVTLTSRAFYNDQLGEFYEKLSAVTGKEMILPMNTGAEAVETALKAVRRWAYDVKKVPENQAEIIVCEGNFHGRTVTVTSFSSAEEYRRGFGPFTPGFKIIPYGDIEALKQAITPNTAAFMLEPIQGEAGIIIPQEGFLKQAQEVCKANNVLLVSDEIQTGFGRTGKMFASDWENVVPDMYIMGKALGGGVFPISAVAADKEILSVFEPGSHGSTFGGNPLGCAVAVAAMDVLADEGLVQRSLEMGAYFMEKLKEINNPIIKEIRGRGLFIGLELTTAARPYCEKLKELGLLCKETHETTIRFAPPLVISKEDLDWAIDRIKQVLHVTE</sequence>
<comment type="function">
    <text evidence="1">Catalyzes the interconversion of ornithine to glutamate semialdehyde.</text>
</comment>
<comment type="catalytic activity">
    <reaction evidence="1">
        <text>a 2-oxocarboxylate + L-ornithine = L-glutamate 5-semialdehyde + an L-alpha-amino acid</text>
        <dbReference type="Rhea" id="RHEA:13877"/>
        <dbReference type="ChEBI" id="CHEBI:35179"/>
        <dbReference type="ChEBI" id="CHEBI:46911"/>
        <dbReference type="ChEBI" id="CHEBI:58066"/>
        <dbReference type="ChEBI" id="CHEBI:59869"/>
        <dbReference type="EC" id="2.6.1.13"/>
    </reaction>
</comment>
<comment type="cofactor">
    <cofactor evidence="1">
        <name>pyridoxal 5'-phosphate</name>
        <dbReference type="ChEBI" id="CHEBI:597326"/>
    </cofactor>
</comment>
<comment type="pathway">
    <text evidence="1">Amino-acid biosynthesis; L-proline biosynthesis; L-glutamate 5-semialdehyde from L-ornithine: step 1/1.</text>
</comment>
<comment type="subcellular location">
    <subcellularLocation>
        <location evidence="1">Cytoplasm</location>
    </subcellularLocation>
</comment>
<comment type="similarity">
    <text evidence="1">Belongs to the class-III pyridoxal-phosphate-dependent aminotransferase family. OAT subfamily.</text>
</comment>
<evidence type="ECO:0000255" key="1">
    <source>
        <dbReference type="HAMAP-Rule" id="MF_01689"/>
    </source>
</evidence>
<feature type="chain" id="PRO_1000187439" description="Ornithine aminotransferase">
    <location>
        <begin position="1"/>
        <end position="399"/>
    </location>
</feature>
<feature type="modified residue" description="N6-(pyridoxal phosphate)lysine" evidence="1">
    <location>
        <position position="255"/>
    </location>
</feature>
<accession>C0ZBR4</accession>
<protein>
    <recommendedName>
        <fullName evidence="1">Ornithine aminotransferase</fullName>
        <shortName evidence="1">OAT</shortName>
        <ecNumber evidence="1">2.6.1.13</ecNumber>
    </recommendedName>
    <alternativeName>
        <fullName evidence="1">Ornithine--oxo-acid aminotransferase</fullName>
    </alternativeName>
</protein>
<reference key="1">
    <citation type="submission" date="2005-03" db="EMBL/GenBank/DDBJ databases">
        <title>Brevibacillus brevis strain 47, complete genome.</title>
        <authorList>
            <person name="Hosoyama A."/>
            <person name="Yamada R."/>
            <person name="Hongo Y."/>
            <person name="Terui Y."/>
            <person name="Ankai A."/>
            <person name="Masuyama W."/>
            <person name="Sekiguchi M."/>
            <person name="Takeda T."/>
            <person name="Asano K."/>
            <person name="Ohji S."/>
            <person name="Ichikawa N."/>
            <person name="Narita S."/>
            <person name="Aoki N."/>
            <person name="Miura H."/>
            <person name="Matsushita S."/>
            <person name="Sekigawa T."/>
            <person name="Yamagata H."/>
            <person name="Yoshikawa H."/>
            <person name="Udaka S."/>
            <person name="Tanikawa S."/>
            <person name="Fujita N."/>
        </authorList>
    </citation>
    <scope>NUCLEOTIDE SEQUENCE [LARGE SCALE GENOMIC DNA]</scope>
    <source>
        <strain>47 / JCM 6285 / NBRC 100599</strain>
    </source>
</reference>